<feature type="transit peptide" description="Mitochondrion" evidence="2">
    <location>
        <begin position="1"/>
        <end position="80"/>
    </location>
</feature>
<feature type="chain" id="PRO_0000412526" description="Cytochrome c oxidase assembly protein COX11, mitochondrial">
    <location>
        <begin position="81"/>
        <end position="287"/>
    </location>
</feature>
<feature type="topological domain" description="Mitochondrial matrix" evidence="2">
    <location>
        <begin position="81"/>
        <end position="92"/>
    </location>
</feature>
<feature type="transmembrane region" description="Helical" evidence="2">
    <location>
        <begin position="93"/>
        <end position="115"/>
    </location>
</feature>
<feature type="topological domain" description="Mitochondrial intermembrane" evidence="2">
    <location>
        <begin position="116"/>
        <end position="287"/>
    </location>
</feature>
<keyword id="KW-0186">Copper</keyword>
<keyword id="KW-0472">Membrane</keyword>
<keyword id="KW-0496">Mitochondrion</keyword>
<keyword id="KW-0999">Mitochondrion inner membrane</keyword>
<keyword id="KW-1185">Reference proteome</keyword>
<keyword id="KW-0809">Transit peptide</keyword>
<keyword id="KW-0812">Transmembrane</keyword>
<keyword id="KW-1133">Transmembrane helix</keyword>
<dbReference type="EMBL" id="AC064879">
    <property type="protein sequence ID" value="AAG00893.1"/>
    <property type="status" value="ALT_SEQ"/>
    <property type="molecule type" value="Genomic_DNA"/>
</dbReference>
<dbReference type="EMBL" id="CP002684">
    <property type="protein sequence ID" value="AEE27427.1"/>
    <property type="molecule type" value="Genomic_DNA"/>
</dbReference>
<dbReference type="EMBL" id="CP002684">
    <property type="protein sequence ID" value="ANM59120.1"/>
    <property type="molecule type" value="Genomic_DNA"/>
</dbReference>
<dbReference type="EMBL" id="CP002684">
    <property type="protein sequence ID" value="ANM59121.1"/>
    <property type="molecule type" value="Genomic_DNA"/>
</dbReference>
<dbReference type="EMBL" id="AK118687">
    <property type="protein sequence ID" value="BAC43281.1"/>
    <property type="molecule type" value="mRNA"/>
</dbReference>
<dbReference type="EMBL" id="BT005280">
    <property type="protein sequence ID" value="AAO63344.1"/>
    <property type="molecule type" value="mRNA"/>
</dbReference>
<dbReference type="PIR" id="E86154">
    <property type="entry name" value="E86154"/>
</dbReference>
<dbReference type="RefSeq" id="NP_001321510.1">
    <property type="nucleotide sequence ID" value="NM_001331337.1"/>
</dbReference>
<dbReference type="RefSeq" id="NP_001321511.1">
    <property type="nucleotide sequence ID" value="NM_001331336.1"/>
</dbReference>
<dbReference type="RefSeq" id="NP_171743.1">
    <property type="nucleotide sequence ID" value="NM_100122.6"/>
</dbReference>
<dbReference type="SMR" id="Q8GWR0"/>
<dbReference type="BioGRID" id="24599">
    <property type="interactions" value="2"/>
</dbReference>
<dbReference type="FunCoup" id="Q8GWR0">
    <property type="interactions" value="3651"/>
</dbReference>
<dbReference type="IntAct" id="Q8GWR0">
    <property type="interactions" value="2"/>
</dbReference>
<dbReference type="STRING" id="3702.Q8GWR0"/>
<dbReference type="PaxDb" id="3702-AT1G02410.1"/>
<dbReference type="ProteomicsDB" id="240956"/>
<dbReference type="DNASU" id="839364"/>
<dbReference type="EnsemblPlants" id="AT1G02410.1">
    <property type="protein sequence ID" value="AT1G02410.1"/>
    <property type="gene ID" value="AT1G02410"/>
</dbReference>
<dbReference type="EnsemblPlants" id="AT1G02410.2">
    <property type="protein sequence ID" value="AT1G02410.2"/>
    <property type="gene ID" value="AT1G02410"/>
</dbReference>
<dbReference type="EnsemblPlants" id="AT1G02410.3">
    <property type="protein sequence ID" value="AT1G02410.3"/>
    <property type="gene ID" value="AT1G02410"/>
</dbReference>
<dbReference type="GeneID" id="839364"/>
<dbReference type="Gramene" id="AT1G02410.1">
    <property type="protein sequence ID" value="AT1G02410.1"/>
    <property type="gene ID" value="AT1G02410"/>
</dbReference>
<dbReference type="Gramene" id="AT1G02410.2">
    <property type="protein sequence ID" value="AT1G02410.2"/>
    <property type="gene ID" value="AT1G02410"/>
</dbReference>
<dbReference type="Gramene" id="AT1G02410.3">
    <property type="protein sequence ID" value="AT1G02410.3"/>
    <property type="gene ID" value="AT1G02410"/>
</dbReference>
<dbReference type="KEGG" id="ath:AT1G02410"/>
<dbReference type="Araport" id="AT1G02410"/>
<dbReference type="TAIR" id="AT1G02410">
    <property type="gene designation" value="COX11"/>
</dbReference>
<dbReference type="eggNOG" id="KOG2540">
    <property type="taxonomic scope" value="Eukaryota"/>
</dbReference>
<dbReference type="HOGENOM" id="CLU_045000_1_2_1"/>
<dbReference type="InParanoid" id="Q8GWR0"/>
<dbReference type="OMA" id="YRIFCQS"/>
<dbReference type="OrthoDB" id="1704689at2759"/>
<dbReference type="PhylomeDB" id="Q8GWR0"/>
<dbReference type="PRO" id="PR:Q8GWR0"/>
<dbReference type="Proteomes" id="UP000006548">
    <property type="component" value="Chromosome 1"/>
</dbReference>
<dbReference type="ExpressionAtlas" id="Q8GWR0">
    <property type="expression patterns" value="baseline and differential"/>
</dbReference>
<dbReference type="GO" id="GO:0005743">
    <property type="term" value="C:mitochondrial inner membrane"/>
    <property type="evidence" value="ECO:0007669"/>
    <property type="project" value="UniProtKB-SubCell"/>
</dbReference>
<dbReference type="GO" id="GO:0005739">
    <property type="term" value="C:mitochondrion"/>
    <property type="evidence" value="ECO:0000314"/>
    <property type="project" value="TAIR"/>
</dbReference>
<dbReference type="GO" id="GO:0005507">
    <property type="term" value="F:copper ion binding"/>
    <property type="evidence" value="ECO:0007669"/>
    <property type="project" value="InterPro"/>
</dbReference>
<dbReference type="GO" id="GO:0009846">
    <property type="term" value="P:pollen germination"/>
    <property type="evidence" value="ECO:0000315"/>
    <property type="project" value="TAIR"/>
</dbReference>
<dbReference type="GO" id="GO:1904960">
    <property type="term" value="P:positive regulation of cytochrome-c oxidase activity"/>
    <property type="evidence" value="ECO:0000315"/>
    <property type="project" value="TAIR"/>
</dbReference>
<dbReference type="GO" id="GO:0010101">
    <property type="term" value="P:post-embryonic root morphogenesis"/>
    <property type="evidence" value="ECO:0000315"/>
    <property type="project" value="TAIR"/>
</dbReference>
<dbReference type="FunFam" id="2.60.370.10:FF:000001">
    <property type="entry name" value="COX11 cytochrome c oxidase assembly homolog"/>
    <property type="match status" value="1"/>
</dbReference>
<dbReference type="Gene3D" id="2.60.370.10">
    <property type="entry name" value="Ctag/Cox11"/>
    <property type="match status" value="1"/>
</dbReference>
<dbReference type="HAMAP" id="MF_00155">
    <property type="entry name" value="CtaG"/>
    <property type="match status" value="1"/>
</dbReference>
<dbReference type="InterPro" id="IPR023471">
    <property type="entry name" value="CtaG/Cox11_dom_sf"/>
</dbReference>
<dbReference type="InterPro" id="IPR007533">
    <property type="entry name" value="Cyt_c_oxidase_assmbl_CtaG"/>
</dbReference>
<dbReference type="NCBIfam" id="NF003465">
    <property type="entry name" value="PRK05089.1"/>
    <property type="match status" value="1"/>
</dbReference>
<dbReference type="PANTHER" id="PTHR21320:SF3">
    <property type="entry name" value="CYTOCHROME C OXIDASE ASSEMBLY PROTEIN COX11, MITOCHONDRIAL-RELATED"/>
    <property type="match status" value="1"/>
</dbReference>
<dbReference type="PANTHER" id="PTHR21320">
    <property type="entry name" value="CYTOCHROME C OXIDASE ASSEMBLY PROTEIN COX11-RELATED"/>
    <property type="match status" value="1"/>
</dbReference>
<dbReference type="Pfam" id="PF04442">
    <property type="entry name" value="CtaG_Cox11"/>
    <property type="match status" value="1"/>
</dbReference>
<dbReference type="SUPFAM" id="SSF110111">
    <property type="entry name" value="Ctag/Cox11"/>
    <property type="match status" value="1"/>
</dbReference>
<organism>
    <name type="scientific">Arabidopsis thaliana</name>
    <name type="common">Mouse-ear cress</name>
    <dbReference type="NCBI Taxonomy" id="3702"/>
    <lineage>
        <taxon>Eukaryota</taxon>
        <taxon>Viridiplantae</taxon>
        <taxon>Streptophyta</taxon>
        <taxon>Embryophyta</taxon>
        <taxon>Tracheophyta</taxon>
        <taxon>Spermatophyta</taxon>
        <taxon>Magnoliopsida</taxon>
        <taxon>eudicotyledons</taxon>
        <taxon>Gunneridae</taxon>
        <taxon>Pentapetalae</taxon>
        <taxon>rosids</taxon>
        <taxon>malvids</taxon>
        <taxon>Brassicales</taxon>
        <taxon>Brassicaceae</taxon>
        <taxon>Camelineae</taxon>
        <taxon>Arabidopsis</taxon>
    </lineage>
</organism>
<accession>Q8GWR0</accession>
<accession>Q9FZ20</accession>
<gene>
    <name type="primary">COX11</name>
    <name type="ordered locus">At1g02410</name>
    <name type="ORF">T6A9.10</name>
</gene>
<proteinExistence type="evidence at transcript level"/>
<evidence type="ECO:0000250" key="1"/>
<evidence type="ECO:0000255" key="2"/>
<evidence type="ECO:0000305" key="3"/>
<reference key="1">
    <citation type="journal article" date="2000" name="Nature">
        <title>Sequence and analysis of chromosome 1 of the plant Arabidopsis thaliana.</title>
        <authorList>
            <person name="Theologis A."/>
            <person name="Ecker J.R."/>
            <person name="Palm C.J."/>
            <person name="Federspiel N.A."/>
            <person name="Kaul S."/>
            <person name="White O."/>
            <person name="Alonso J."/>
            <person name="Altafi H."/>
            <person name="Araujo R."/>
            <person name="Bowman C.L."/>
            <person name="Brooks S.Y."/>
            <person name="Buehler E."/>
            <person name="Chan A."/>
            <person name="Chao Q."/>
            <person name="Chen H."/>
            <person name="Cheuk R.F."/>
            <person name="Chin C.W."/>
            <person name="Chung M.K."/>
            <person name="Conn L."/>
            <person name="Conway A.B."/>
            <person name="Conway A.R."/>
            <person name="Creasy T.H."/>
            <person name="Dewar K."/>
            <person name="Dunn P."/>
            <person name="Etgu P."/>
            <person name="Feldblyum T.V."/>
            <person name="Feng J.-D."/>
            <person name="Fong B."/>
            <person name="Fujii C.Y."/>
            <person name="Gill J.E."/>
            <person name="Goldsmith A.D."/>
            <person name="Haas B."/>
            <person name="Hansen N.F."/>
            <person name="Hughes B."/>
            <person name="Huizar L."/>
            <person name="Hunter J.L."/>
            <person name="Jenkins J."/>
            <person name="Johnson-Hopson C."/>
            <person name="Khan S."/>
            <person name="Khaykin E."/>
            <person name="Kim C.J."/>
            <person name="Koo H.L."/>
            <person name="Kremenetskaia I."/>
            <person name="Kurtz D.B."/>
            <person name="Kwan A."/>
            <person name="Lam B."/>
            <person name="Langin-Hooper S."/>
            <person name="Lee A."/>
            <person name="Lee J.M."/>
            <person name="Lenz C.A."/>
            <person name="Li J.H."/>
            <person name="Li Y.-P."/>
            <person name="Lin X."/>
            <person name="Liu S.X."/>
            <person name="Liu Z.A."/>
            <person name="Luros J.S."/>
            <person name="Maiti R."/>
            <person name="Marziali A."/>
            <person name="Militscher J."/>
            <person name="Miranda M."/>
            <person name="Nguyen M."/>
            <person name="Nierman W.C."/>
            <person name="Osborne B.I."/>
            <person name="Pai G."/>
            <person name="Peterson J."/>
            <person name="Pham P.K."/>
            <person name="Rizzo M."/>
            <person name="Rooney T."/>
            <person name="Rowley D."/>
            <person name="Sakano H."/>
            <person name="Salzberg S.L."/>
            <person name="Schwartz J.R."/>
            <person name="Shinn P."/>
            <person name="Southwick A.M."/>
            <person name="Sun H."/>
            <person name="Tallon L.J."/>
            <person name="Tambunga G."/>
            <person name="Toriumi M.J."/>
            <person name="Town C.D."/>
            <person name="Utterback T."/>
            <person name="Van Aken S."/>
            <person name="Vaysberg M."/>
            <person name="Vysotskaia V.S."/>
            <person name="Walker M."/>
            <person name="Wu D."/>
            <person name="Yu G."/>
            <person name="Fraser C.M."/>
            <person name="Venter J.C."/>
            <person name="Davis R.W."/>
        </authorList>
    </citation>
    <scope>NUCLEOTIDE SEQUENCE [LARGE SCALE GENOMIC DNA]</scope>
    <source>
        <strain>cv. Columbia</strain>
    </source>
</reference>
<reference key="2">
    <citation type="journal article" date="2017" name="Plant J.">
        <title>Araport11: a complete reannotation of the Arabidopsis thaliana reference genome.</title>
        <authorList>
            <person name="Cheng C.Y."/>
            <person name="Krishnakumar V."/>
            <person name="Chan A.P."/>
            <person name="Thibaud-Nissen F."/>
            <person name="Schobel S."/>
            <person name="Town C.D."/>
        </authorList>
    </citation>
    <scope>GENOME REANNOTATION</scope>
    <source>
        <strain>cv. Columbia</strain>
    </source>
</reference>
<reference key="3">
    <citation type="journal article" date="2002" name="Science">
        <title>Functional annotation of a full-length Arabidopsis cDNA collection.</title>
        <authorList>
            <person name="Seki M."/>
            <person name="Narusaka M."/>
            <person name="Kamiya A."/>
            <person name="Ishida J."/>
            <person name="Satou M."/>
            <person name="Sakurai T."/>
            <person name="Nakajima M."/>
            <person name="Enju A."/>
            <person name="Akiyama K."/>
            <person name="Oono Y."/>
            <person name="Muramatsu M."/>
            <person name="Hayashizaki Y."/>
            <person name="Kawai J."/>
            <person name="Carninci P."/>
            <person name="Itoh M."/>
            <person name="Ishii Y."/>
            <person name="Arakawa T."/>
            <person name="Shibata K."/>
            <person name="Shinagawa A."/>
            <person name="Shinozaki K."/>
        </authorList>
    </citation>
    <scope>NUCLEOTIDE SEQUENCE [LARGE SCALE MRNA]</scope>
    <source>
        <strain>cv. Columbia</strain>
    </source>
</reference>
<reference key="4">
    <citation type="journal article" date="2003" name="Science">
        <title>Empirical analysis of transcriptional activity in the Arabidopsis genome.</title>
        <authorList>
            <person name="Yamada K."/>
            <person name="Lim J."/>
            <person name="Dale J.M."/>
            <person name="Chen H."/>
            <person name="Shinn P."/>
            <person name="Palm C.J."/>
            <person name="Southwick A.M."/>
            <person name="Wu H.C."/>
            <person name="Kim C.J."/>
            <person name="Nguyen M."/>
            <person name="Pham P.K."/>
            <person name="Cheuk R.F."/>
            <person name="Karlin-Newmann G."/>
            <person name="Liu S.X."/>
            <person name="Lam B."/>
            <person name="Sakano H."/>
            <person name="Wu T."/>
            <person name="Yu G."/>
            <person name="Miranda M."/>
            <person name="Quach H.L."/>
            <person name="Tripp M."/>
            <person name="Chang C.H."/>
            <person name="Lee J.M."/>
            <person name="Toriumi M.J."/>
            <person name="Chan M.M."/>
            <person name="Tang C.C."/>
            <person name="Onodera C.S."/>
            <person name="Deng J.M."/>
            <person name="Akiyama K."/>
            <person name="Ansari Y."/>
            <person name="Arakawa T."/>
            <person name="Banh J."/>
            <person name="Banno F."/>
            <person name="Bowser L."/>
            <person name="Brooks S.Y."/>
            <person name="Carninci P."/>
            <person name="Chao Q."/>
            <person name="Choy N."/>
            <person name="Enju A."/>
            <person name="Goldsmith A.D."/>
            <person name="Gurjal M."/>
            <person name="Hansen N.F."/>
            <person name="Hayashizaki Y."/>
            <person name="Johnson-Hopson C."/>
            <person name="Hsuan V.W."/>
            <person name="Iida K."/>
            <person name="Karnes M."/>
            <person name="Khan S."/>
            <person name="Koesema E."/>
            <person name="Ishida J."/>
            <person name="Jiang P.X."/>
            <person name="Jones T."/>
            <person name="Kawai J."/>
            <person name="Kamiya A."/>
            <person name="Meyers C."/>
            <person name="Nakajima M."/>
            <person name="Narusaka M."/>
            <person name="Seki M."/>
            <person name="Sakurai T."/>
            <person name="Satou M."/>
            <person name="Tamse R."/>
            <person name="Vaysberg M."/>
            <person name="Wallender E.K."/>
            <person name="Wong C."/>
            <person name="Yamamura Y."/>
            <person name="Yuan S."/>
            <person name="Shinozaki K."/>
            <person name="Davis R.W."/>
            <person name="Theologis A."/>
            <person name="Ecker J.R."/>
        </authorList>
    </citation>
    <scope>NUCLEOTIDE SEQUENCE [LARGE SCALE MRNA]</scope>
    <source>
        <strain>cv. Columbia</strain>
    </source>
</reference>
<comment type="function">
    <text evidence="1">Exerts its effect at some terminal stage of cytochrome c oxidase synthesis, probably by being involved in the insertion of the copper B into subunit I.</text>
</comment>
<comment type="subcellular location">
    <subcellularLocation>
        <location evidence="1">Mitochondrion inner membrane</location>
        <topology evidence="1">Single-pass membrane protein</topology>
        <orientation evidence="1">Intermembrane side</orientation>
    </subcellularLocation>
</comment>
<comment type="similarity">
    <text evidence="3">Belongs to the COX11/CtaG (TC 3.D.4.8) family.</text>
</comment>
<comment type="sequence caution" evidence="3">
    <conflict type="erroneous gene model prediction">
        <sequence resource="EMBL-CDS" id="AAG00893"/>
    </conflict>
</comment>
<name>COX11_ARATH</name>
<protein>
    <recommendedName>
        <fullName>Cytochrome c oxidase assembly protein COX11, mitochondrial</fullName>
    </recommendedName>
</protein>
<sequence length="287" mass="32605">MSWSKACRGTRISSYLENLHRTSQYPRTILCSRYYTHGACKSNEHYLRSKRVFWGSSSSWSLNSHSATAKSMLDSAHRQYSTHSPSETKSQKMLYYLTAVVFGMVGLTYAAVPLYRTFCQATGYGGTVQRKETVEEKIARHSESGTVTEREIVVQFNADVADGMQWKFTPTQREVRVKPGESALAFYTAENKSSAPITGVSTYNVTPMKAGVYFNKIQCFCFEEQRLLPGEQIDMPVFFYIDPEFETDPRMDGINNLILSYTFFKVSEENTTETVNNNNSVPVQETN</sequence>